<comment type="function">
    <text evidence="1">Catalyzes the reversible isomerization of glucose-6-phosphate to fructose-6-phosphate.</text>
</comment>
<comment type="catalytic activity">
    <reaction evidence="1">
        <text>alpha-D-glucose 6-phosphate = beta-D-fructose 6-phosphate</text>
        <dbReference type="Rhea" id="RHEA:11816"/>
        <dbReference type="ChEBI" id="CHEBI:57634"/>
        <dbReference type="ChEBI" id="CHEBI:58225"/>
        <dbReference type="EC" id="5.3.1.9"/>
    </reaction>
</comment>
<comment type="pathway">
    <text evidence="1">Carbohydrate biosynthesis; gluconeogenesis.</text>
</comment>
<comment type="pathway">
    <text evidence="1">Carbohydrate degradation; glycolysis; D-glyceraldehyde 3-phosphate and glycerone phosphate from D-glucose: step 2/4.</text>
</comment>
<comment type="subcellular location">
    <subcellularLocation>
        <location evidence="1">Cytoplasm</location>
    </subcellularLocation>
</comment>
<comment type="similarity">
    <text evidence="1">Belongs to the GPI family.</text>
</comment>
<gene>
    <name evidence="1" type="primary">pgi</name>
    <name type="ordered locus">YPDSF_0182</name>
</gene>
<sequence>MKNINPSQTAAWKALQQHFEQMKDVTISSLFAKDDQRFNRFSATFDDQMLVDFSKNRITSETLEKLQDLAKETDLAGAIKSMFSGEKINRTEDRAVLHIALRNRSNTPIVVDGKDVMPEVNAVLAKMKQFCDRVISGDWKGYTGKAITDVVNIGIGGSDLGPYMVTEALRPYKNHLNMHFVSNVDGTHIAEALKPLNPETTLFLVASKTFTTQETMTNAHSARDWFLSAAGDPAHVAKHFAALSTNAKAVGEFGIDTNNMFEFWDWVGGRYSLWSAIGLSIALSVGFEHFEQLLSGAHAMDKHFAETPAEKNLPVLLALIGIWYNNFFGAETEAILPYDQYMHRFPAYFQQGNMESNGKYVDRNGHPVDYQTGPIIWGEPGTNGQHAFYQLIHQGTKLIPCDFIAPAISHNPLSDHHAKLLSNFFAQTEALAFGKSLEDVEAEFAAAGKTPEQVAHVAPFKVFEGNRPTNSILLREITPFSLGALIALYEHKIFTQGVILNIYTFDQWGVELGKQLANRILPELADDQEVTSHDSSTNALINRFKNWR</sequence>
<proteinExistence type="inferred from homology"/>
<feature type="chain" id="PRO_1000014034" description="Glucose-6-phosphate isomerase">
    <location>
        <begin position="1"/>
        <end position="548"/>
    </location>
</feature>
<feature type="active site" description="Proton donor" evidence="1">
    <location>
        <position position="355"/>
    </location>
</feature>
<feature type="active site" evidence="1">
    <location>
        <position position="386"/>
    </location>
</feature>
<feature type="active site" evidence="1">
    <location>
        <position position="514"/>
    </location>
</feature>
<protein>
    <recommendedName>
        <fullName evidence="1">Glucose-6-phosphate isomerase</fullName>
        <shortName evidence="1">GPI</shortName>
        <ecNumber evidence="1">5.3.1.9</ecNumber>
    </recommendedName>
    <alternativeName>
        <fullName evidence="1">Phosphoglucose isomerase</fullName>
        <shortName evidence="1">PGI</shortName>
    </alternativeName>
    <alternativeName>
        <fullName evidence="1">Phosphohexose isomerase</fullName>
        <shortName evidence="1">PHI</shortName>
    </alternativeName>
</protein>
<organism>
    <name type="scientific">Yersinia pestis (strain Pestoides F)</name>
    <dbReference type="NCBI Taxonomy" id="386656"/>
    <lineage>
        <taxon>Bacteria</taxon>
        <taxon>Pseudomonadati</taxon>
        <taxon>Pseudomonadota</taxon>
        <taxon>Gammaproteobacteria</taxon>
        <taxon>Enterobacterales</taxon>
        <taxon>Yersiniaceae</taxon>
        <taxon>Yersinia</taxon>
    </lineage>
</organism>
<keyword id="KW-0963">Cytoplasm</keyword>
<keyword id="KW-0312">Gluconeogenesis</keyword>
<keyword id="KW-0324">Glycolysis</keyword>
<keyword id="KW-0413">Isomerase</keyword>
<accession>A4TH39</accession>
<dbReference type="EC" id="5.3.1.9" evidence="1"/>
<dbReference type="EMBL" id="CP000668">
    <property type="protein sequence ID" value="ABP38601.1"/>
    <property type="molecule type" value="Genomic_DNA"/>
</dbReference>
<dbReference type="RefSeq" id="WP_002212085.1">
    <property type="nucleotide sequence ID" value="NZ_CP009715.1"/>
</dbReference>
<dbReference type="SMR" id="A4TH39"/>
<dbReference type="GeneID" id="57975003"/>
<dbReference type="KEGG" id="ypp:YPDSF_0182"/>
<dbReference type="PATRIC" id="fig|386656.14.peg.1470"/>
<dbReference type="UniPathway" id="UPA00109">
    <property type="reaction ID" value="UER00181"/>
</dbReference>
<dbReference type="UniPathway" id="UPA00138"/>
<dbReference type="GO" id="GO:0005829">
    <property type="term" value="C:cytosol"/>
    <property type="evidence" value="ECO:0007669"/>
    <property type="project" value="TreeGrafter"/>
</dbReference>
<dbReference type="GO" id="GO:0097367">
    <property type="term" value="F:carbohydrate derivative binding"/>
    <property type="evidence" value="ECO:0007669"/>
    <property type="project" value="InterPro"/>
</dbReference>
<dbReference type="GO" id="GO:0004347">
    <property type="term" value="F:glucose-6-phosphate isomerase activity"/>
    <property type="evidence" value="ECO:0007669"/>
    <property type="project" value="UniProtKB-UniRule"/>
</dbReference>
<dbReference type="GO" id="GO:0048029">
    <property type="term" value="F:monosaccharide binding"/>
    <property type="evidence" value="ECO:0007669"/>
    <property type="project" value="TreeGrafter"/>
</dbReference>
<dbReference type="GO" id="GO:0006094">
    <property type="term" value="P:gluconeogenesis"/>
    <property type="evidence" value="ECO:0007669"/>
    <property type="project" value="UniProtKB-UniRule"/>
</dbReference>
<dbReference type="GO" id="GO:0051156">
    <property type="term" value="P:glucose 6-phosphate metabolic process"/>
    <property type="evidence" value="ECO:0007669"/>
    <property type="project" value="TreeGrafter"/>
</dbReference>
<dbReference type="GO" id="GO:0006096">
    <property type="term" value="P:glycolytic process"/>
    <property type="evidence" value="ECO:0007669"/>
    <property type="project" value="UniProtKB-UniRule"/>
</dbReference>
<dbReference type="CDD" id="cd05015">
    <property type="entry name" value="SIS_PGI_1"/>
    <property type="match status" value="1"/>
</dbReference>
<dbReference type="CDD" id="cd05016">
    <property type="entry name" value="SIS_PGI_2"/>
    <property type="match status" value="1"/>
</dbReference>
<dbReference type="FunFam" id="1.10.1390.10:FF:000001">
    <property type="entry name" value="Glucose-6-phosphate isomerase"/>
    <property type="match status" value="1"/>
</dbReference>
<dbReference type="FunFam" id="3.40.50.10490:FF:000004">
    <property type="entry name" value="Glucose-6-phosphate isomerase"/>
    <property type="match status" value="1"/>
</dbReference>
<dbReference type="Gene3D" id="1.10.1390.10">
    <property type="match status" value="1"/>
</dbReference>
<dbReference type="Gene3D" id="3.40.50.10490">
    <property type="entry name" value="Glucose-6-phosphate isomerase like protein, domain 1"/>
    <property type="match status" value="2"/>
</dbReference>
<dbReference type="HAMAP" id="MF_00473">
    <property type="entry name" value="G6P_isomerase"/>
    <property type="match status" value="1"/>
</dbReference>
<dbReference type="InterPro" id="IPR001672">
    <property type="entry name" value="G6P_Isomerase"/>
</dbReference>
<dbReference type="InterPro" id="IPR023096">
    <property type="entry name" value="G6P_Isomerase_C"/>
</dbReference>
<dbReference type="InterPro" id="IPR018189">
    <property type="entry name" value="Phosphoglucose_isomerase_CS"/>
</dbReference>
<dbReference type="InterPro" id="IPR046348">
    <property type="entry name" value="SIS_dom_sf"/>
</dbReference>
<dbReference type="InterPro" id="IPR035476">
    <property type="entry name" value="SIS_PGI_1"/>
</dbReference>
<dbReference type="InterPro" id="IPR035482">
    <property type="entry name" value="SIS_PGI_2"/>
</dbReference>
<dbReference type="NCBIfam" id="NF001211">
    <property type="entry name" value="PRK00179.1"/>
    <property type="match status" value="1"/>
</dbReference>
<dbReference type="PANTHER" id="PTHR11469">
    <property type="entry name" value="GLUCOSE-6-PHOSPHATE ISOMERASE"/>
    <property type="match status" value="1"/>
</dbReference>
<dbReference type="PANTHER" id="PTHR11469:SF1">
    <property type="entry name" value="GLUCOSE-6-PHOSPHATE ISOMERASE"/>
    <property type="match status" value="1"/>
</dbReference>
<dbReference type="Pfam" id="PF00342">
    <property type="entry name" value="PGI"/>
    <property type="match status" value="1"/>
</dbReference>
<dbReference type="PRINTS" id="PR00662">
    <property type="entry name" value="G6PISOMERASE"/>
</dbReference>
<dbReference type="SUPFAM" id="SSF53697">
    <property type="entry name" value="SIS domain"/>
    <property type="match status" value="1"/>
</dbReference>
<dbReference type="PROSITE" id="PS00765">
    <property type="entry name" value="P_GLUCOSE_ISOMERASE_1"/>
    <property type="match status" value="1"/>
</dbReference>
<dbReference type="PROSITE" id="PS00174">
    <property type="entry name" value="P_GLUCOSE_ISOMERASE_2"/>
    <property type="match status" value="1"/>
</dbReference>
<dbReference type="PROSITE" id="PS51463">
    <property type="entry name" value="P_GLUCOSE_ISOMERASE_3"/>
    <property type="match status" value="1"/>
</dbReference>
<name>G6PI_YERPP</name>
<reference key="1">
    <citation type="submission" date="2007-02" db="EMBL/GenBank/DDBJ databases">
        <title>Complete sequence of chromosome of Yersinia pestis Pestoides F.</title>
        <authorList>
            <consortium name="US DOE Joint Genome Institute"/>
            <person name="Copeland A."/>
            <person name="Lucas S."/>
            <person name="Lapidus A."/>
            <person name="Barry K."/>
            <person name="Detter J.C."/>
            <person name="Glavina del Rio T."/>
            <person name="Hammon N."/>
            <person name="Israni S."/>
            <person name="Dalin E."/>
            <person name="Tice H."/>
            <person name="Pitluck S."/>
            <person name="Di Bartolo G."/>
            <person name="Chain P."/>
            <person name="Malfatti S."/>
            <person name="Shin M."/>
            <person name="Vergez L."/>
            <person name="Schmutz J."/>
            <person name="Larimer F."/>
            <person name="Land M."/>
            <person name="Hauser L."/>
            <person name="Worsham P."/>
            <person name="Chu M."/>
            <person name="Bearden S."/>
            <person name="Garcia E."/>
            <person name="Richardson P."/>
        </authorList>
    </citation>
    <scope>NUCLEOTIDE SEQUENCE [LARGE SCALE GENOMIC DNA]</scope>
    <source>
        <strain>Pestoides F</strain>
    </source>
</reference>
<evidence type="ECO:0000255" key="1">
    <source>
        <dbReference type="HAMAP-Rule" id="MF_00473"/>
    </source>
</evidence>